<keyword id="KW-0249">Electron transport</keyword>
<keyword id="KW-0472">Membrane</keyword>
<keyword id="KW-0496">Mitochondrion</keyword>
<keyword id="KW-0999">Mitochondrion inner membrane</keyword>
<keyword id="KW-0520">NAD</keyword>
<keyword id="KW-1185">Reference proteome</keyword>
<keyword id="KW-0679">Respiratory chain</keyword>
<keyword id="KW-1278">Translocase</keyword>
<keyword id="KW-0812">Transmembrane</keyword>
<keyword id="KW-1133">Transmembrane helix</keyword>
<keyword id="KW-0813">Transport</keyword>
<keyword id="KW-0830">Ubiquinone</keyword>
<feature type="chain" id="PRO_0000372688" description="NADH-ubiquinone oxidoreductase chain 5">
    <location>
        <begin position="1"/>
        <end position="580"/>
    </location>
</feature>
<feature type="transmembrane region" description="Helical" evidence="3">
    <location>
        <begin position="12"/>
        <end position="32"/>
    </location>
</feature>
<feature type="transmembrane region" description="Helical" evidence="3">
    <location>
        <begin position="50"/>
        <end position="70"/>
    </location>
</feature>
<feature type="transmembrane region" description="Helical" evidence="3">
    <location>
        <begin position="92"/>
        <end position="112"/>
    </location>
</feature>
<feature type="transmembrane region" description="Helical" evidence="3">
    <location>
        <begin position="113"/>
        <end position="133"/>
    </location>
</feature>
<feature type="transmembrane region" description="Helical" evidence="3">
    <location>
        <begin position="153"/>
        <end position="173"/>
    </location>
</feature>
<feature type="transmembrane region" description="Helical" evidence="3">
    <location>
        <begin position="176"/>
        <end position="196"/>
    </location>
</feature>
<feature type="transmembrane region" description="Helical" evidence="3">
    <location>
        <begin position="218"/>
        <end position="240"/>
    </location>
</feature>
<feature type="transmembrane region" description="Helical" evidence="3">
    <location>
        <begin position="249"/>
        <end position="269"/>
    </location>
</feature>
<feature type="transmembrane region" description="Helical" evidence="3">
    <location>
        <begin position="274"/>
        <end position="294"/>
    </location>
</feature>
<feature type="transmembrane region" description="Helical" evidence="3">
    <location>
        <begin position="300"/>
        <end position="320"/>
    </location>
</feature>
<feature type="transmembrane region" description="Helical" evidence="3">
    <location>
        <begin position="343"/>
        <end position="363"/>
    </location>
</feature>
<feature type="transmembrane region" description="Helical" evidence="3">
    <location>
        <begin position="378"/>
        <end position="400"/>
    </location>
</feature>
<feature type="transmembrane region" description="Helical" evidence="3">
    <location>
        <begin position="427"/>
        <end position="447"/>
    </location>
</feature>
<feature type="transmembrane region" description="Helical" evidence="3">
    <location>
        <begin position="464"/>
        <end position="484"/>
    </location>
</feature>
<feature type="transmembrane region" description="Helical" evidence="3">
    <location>
        <begin position="500"/>
        <end position="520"/>
    </location>
</feature>
<feature type="transmembrane region" description="Helical" evidence="3">
    <location>
        <begin position="560"/>
        <end position="580"/>
    </location>
</feature>
<gene>
    <name evidence="2" type="primary">mt:ND5</name>
    <name evidence="5" type="synonym">ND5</name>
</gene>
<evidence type="ECO:0000250" key="1"/>
<evidence type="ECO:0000250" key="2">
    <source>
        <dbReference type="UniProtKB" id="P18932"/>
    </source>
</evidence>
<evidence type="ECO:0000255" key="3"/>
<evidence type="ECO:0000305" key="4"/>
<evidence type="ECO:0000312" key="5">
    <source>
        <dbReference type="EMBL" id="ABY51630.1"/>
    </source>
</evidence>
<organism>
    <name type="scientific">Aedes aegypti</name>
    <name type="common">Yellowfever mosquito</name>
    <name type="synonym">Culex aegypti</name>
    <dbReference type="NCBI Taxonomy" id="7159"/>
    <lineage>
        <taxon>Eukaryota</taxon>
        <taxon>Metazoa</taxon>
        <taxon>Ecdysozoa</taxon>
        <taxon>Arthropoda</taxon>
        <taxon>Hexapoda</taxon>
        <taxon>Insecta</taxon>
        <taxon>Pterygota</taxon>
        <taxon>Neoptera</taxon>
        <taxon>Endopterygota</taxon>
        <taxon>Diptera</taxon>
        <taxon>Nematocera</taxon>
        <taxon>Culicoidea</taxon>
        <taxon>Culicidae</taxon>
        <taxon>Culicinae</taxon>
        <taxon>Aedini</taxon>
        <taxon>Aedes</taxon>
        <taxon>Stegomyia</taxon>
    </lineage>
</organism>
<comment type="function">
    <text evidence="1 4">Core subunit of the mitochondrial membrane respiratory chain NADH dehydrogenase (Complex I) that is believed to belong to the minimal assembly required for catalysis. Complex I functions in the transfer of electrons from NADH to the respiratory chain. The immediate electron acceptor for the enzyme is believed to be ubiquinone (By similarity).</text>
</comment>
<comment type="catalytic activity">
    <reaction>
        <text>a ubiquinone + NADH + 5 H(+)(in) = a ubiquinol + NAD(+) + 4 H(+)(out)</text>
        <dbReference type="Rhea" id="RHEA:29091"/>
        <dbReference type="Rhea" id="RHEA-COMP:9565"/>
        <dbReference type="Rhea" id="RHEA-COMP:9566"/>
        <dbReference type="ChEBI" id="CHEBI:15378"/>
        <dbReference type="ChEBI" id="CHEBI:16389"/>
        <dbReference type="ChEBI" id="CHEBI:17976"/>
        <dbReference type="ChEBI" id="CHEBI:57540"/>
        <dbReference type="ChEBI" id="CHEBI:57945"/>
        <dbReference type="EC" id="7.1.1.2"/>
    </reaction>
</comment>
<comment type="subcellular location">
    <subcellularLocation>
        <location evidence="4">Mitochondrion inner membrane</location>
        <topology evidence="4">Multi-pass membrane protein</topology>
    </subcellularLocation>
</comment>
<comment type="similarity">
    <text evidence="3">Belongs to the complex I subunit 5 family.</text>
</comment>
<accession>B0FWD3</accession>
<proteinExistence type="inferred from homology"/>
<dbReference type="EC" id="7.1.1.2"/>
<dbReference type="EMBL" id="EU352212">
    <property type="protein sequence ID" value="ABY51630.1"/>
    <property type="molecule type" value="Genomic_DNA"/>
</dbReference>
<dbReference type="RefSeq" id="YP_001649169.1">
    <property type="nucleotide sequence ID" value="NC_010241.1"/>
</dbReference>
<dbReference type="SMR" id="B0FWD3"/>
<dbReference type="FunCoup" id="B0FWD3">
    <property type="interactions" value="134"/>
</dbReference>
<dbReference type="STRING" id="7159.B0FWD3"/>
<dbReference type="PaxDb" id="7159-AAEL018678-PA"/>
<dbReference type="VEuPathDB" id="VectorBase:AAEL018678"/>
<dbReference type="eggNOG" id="KOG4668">
    <property type="taxonomic scope" value="Eukaryota"/>
</dbReference>
<dbReference type="HOGENOM" id="CLU_007100_6_0_1"/>
<dbReference type="InParanoid" id="B0FWD3"/>
<dbReference type="OrthoDB" id="10069788at2759"/>
<dbReference type="Proteomes" id="UP000008820">
    <property type="component" value="Mitochondrion MT"/>
</dbReference>
<dbReference type="Proteomes" id="UP000682892">
    <property type="component" value="Mitochondrion MT"/>
</dbReference>
<dbReference type="GO" id="GO:0005743">
    <property type="term" value="C:mitochondrial inner membrane"/>
    <property type="evidence" value="ECO:0007669"/>
    <property type="project" value="UniProtKB-SubCell"/>
</dbReference>
<dbReference type="GO" id="GO:0008137">
    <property type="term" value="F:NADH dehydrogenase (ubiquinone) activity"/>
    <property type="evidence" value="ECO:0007669"/>
    <property type="project" value="UniProtKB-EC"/>
</dbReference>
<dbReference type="GO" id="GO:0042773">
    <property type="term" value="P:ATP synthesis coupled electron transport"/>
    <property type="evidence" value="ECO:0007669"/>
    <property type="project" value="InterPro"/>
</dbReference>
<dbReference type="GO" id="GO:0015990">
    <property type="term" value="P:electron transport coupled proton transport"/>
    <property type="evidence" value="ECO:0007669"/>
    <property type="project" value="TreeGrafter"/>
</dbReference>
<dbReference type="InterPro" id="IPR010934">
    <property type="entry name" value="NADH_DH_su5_C"/>
</dbReference>
<dbReference type="InterPro" id="IPR001750">
    <property type="entry name" value="ND/Mrp_TM"/>
</dbReference>
<dbReference type="InterPro" id="IPR003945">
    <property type="entry name" value="NU5C-like"/>
</dbReference>
<dbReference type="InterPro" id="IPR001516">
    <property type="entry name" value="Proton_antipo_N"/>
</dbReference>
<dbReference type="PANTHER" id="PTHR42829">
    <property type="entry name" value="NADH-UBIQUINONE OXIDOREDUCTASE CHAIN 5"/>
    <property type="match status" value="1"/>
</dbReference>
<dbReference type="PANTHER" id="PTHR42829:SF2">
    <property type="entry name" value="NADH-UBIQUINONE OXIDOREDUCTASE CHAIN 5"/>
    <property type="match status" value="1"/>
</dbReference>
<dbReference type="Pfam" id="PF06455">
    <property type="entry name" value="NADH5_C"/>
    <property type="match status" value="1"/>
</dbReference>
<dbReference type="Pfam" id="PF00361">
    <property type="entry name" value="Proton_antipo_M"/>
    <property type="match status" value="1"/>
</dbReference>
<dbReference type="Pfam" id="PF00662">
    <property type="entry name" value="Proton_antipo_N"/>
    <property type="match status" value="1"/>
</dbReference>
<dbReference type="PRINTS" id="PR01434">
    <property type="entry name" value="NADHDHGNASE5"/>
</dbReference>
<dbReference type="PRINTS" id="PR01435">
    <property type="entry name" value="NPOXDRDTASE5"/>
</dbReference>
<name>NU5M_AEDAE</name>
<geneLocation type="mitochondrion" evidence="5"/>
<reference evidence="5" key="1">
    <citation type="submission" date="2007-12" db="EMBL/GenBank/DDBJ databases">
        <title>The mitochondrial genome of the Yellow fever mosquito - Aedes aegypti.</title>
        <authorList>
            <person name="Lobo N.F."/>
            <person name="Lovin D."/>
            <person name="DeBruyn B."/>
            <person name="Puiu D."/>
            <person name="Shumway M."/>
            <person name="Haas B."/>
            <person name="Nene V."/>
            <person name="Severson D.W."/>
        </authorList>
    </citation>
    <scope>NUCLEOTIDE SEQUENCE [LARGE SCALE GENOMIC DNA]</scope>
    <source>
        <strain evidence="5">LVPib12</strain>
    </source>
</reference>
<protein>
    <recommendedName>
        <fullName>NADH-ubiquinone oxidoreductase chain 5</fullName>
        <ecNumber>7.1.1.2</ecNumber>
    </recommendedName>
    <alternativeName>
        <fullName>NADH dehydrogenase subunit 5</fullName>
    </alternativeName>
</protein>
<sequence>MNYLVNYCKNSFYILIFISFTLFILSLKFLLMDLVYFIEWEIVSLHSMSIVMTFLFDWMSLMFMSFVLLISSLVIFYSDQYMGEDYNVNRFILLVLMFVMSMMMLIISPNLISILLGWDGLGLVSYCLVIYFQNVKSYNAGMLTALSNRIGDVALLLAIAWMLNYGSWNYIFYLDMMKNNFEMMVIGGLVMLAAMTKSAQIPFSSWLPAAMAAPTPVSALVHSSTLVTAGVYLLIRFNILLDNSKLGQFLLLVSGLTMFMAGLGANFEFDLKKIIALSTLSQLGLMMSILSIGYYKLAFFHLLTHALFKALLFMCAGVIIHNTKNAQDIRFMGGLSMSMPLTCSCFNIANLALCGMPFLAGFYSKDLILETVMLSYMNFFSFFLFFFSTGLTVCYSFRLVYYSMTGDFNSTTLNMLNDKGWTMSFSIFFLMVMAIIGGSMLSWLMFFNPEMICLPYYLKNLTLMVCLLGGFTGYLISNVNFFFINKSLVYYNFSFFSGSMWFMPLISTVGVVKWPLILGMYSYKMFDQGWSEYFGGQMLYNQLKIYSLYVQEFQNNNLKIYLLSYMLWVIILVSMMLFLN</sequence>